<accession>B7MMY3</accession>
<name>TAM_ECO45</name>
<reference key="1">
    <citation type="journal article" date="2009" name="PLoS Genet.">
        <title>Organised genome dynamics in the Escherichia coli species results in highly diverse adaptive paths.</title>
        <authorList>
            <person name="Touchon M."/>
            <person name="Hoede C."/>
            <person name="Tenaillon O."/>
            <person name="Barbe V."/>
            <person name="Baeriswyl S."/>
            <person name="Bidet P."/>
            <person name="Bingen E."/>
            <person name="Bonacorsi S."/>
            <person name="Bouchier C."/>
            <person name="Bouvet O."/>
            <person name="Calteau A."/>
            <person name="Chiapello H."/>
            <person name="Clermont O."/>
            <person name="Cruveiller S."/>
            <person name="Danchin A."/>
            <person name="Diard M."/>
            <person name="Dossat C."/>
            <person name="Karoui M.E."/>
            <person name="Frapy E."/>
            <person name="Garry L."/>
            <person name="Ghigo J.M."/>
            <person name="Gilles A.M."/>
            <person name="Johnson J."/>
            <person name="Le Bouguenec C."/>
            <person name="Lescat M."/>
            <person name="Mangenot S."/>
            <person name="Martinez-Jehanne V."/>
            <person name="Matic I."/>
            <person name="Nassif X."/>
            <person name="Oztas S."/>
            <person name="Petit M.A."/>
            <person name="Pichon C."/>
            <person name="Rouy Z."/>
            <person name="Ruf C.S."/>
            <person name="Schneider D."/>
            <person name="Tourret J."/>
            <person name="Vacherie B."/>
            <person name="Vallenet D."/>
            <person name="Medigue C."/>
            <person name="Rocha E.P.C."/>
            <person name="Denamur E."/>
        </authorList>
    </citation>
    <scope>NUCLEOTIDE SEQUENCE [LARGE SCALE GENOMIC DNA]</scope>
    <source>
        <strain>S88 / ExPEC</strain>
    </source>
</reference>
<comment type="function">
    <text evidence="1">Catalyzes the S-adenosylmethionine monomethyl esterification of trans-aconitate.</text>
</comment>
<comment type="catalytic activity">
    <reaction evidence="1">
        <text>trans-aconitate + S-adenosyl-L-methionine = (E)-3-(methoxycarbonyl)pent-2-enedioate + S-adenosyl-L-homocysteine</text>
        <dbReference type="Rhea" id="RHEA:14969"/>
        <dbReference type="ChEBI" id="CHEBI:15708"/>
        <dbReference type="ChEBI" id="CHEBI:57470"/>
        <dbReference type="ChEBI" id="CHEBI:57856"/>
        <dbReference type="ChEBI" id="CHEBI:59789"/>
        <dbReference type="EC" id="2.1.1.144"/>
    </reaction>
</comment>
<comment type="subcellular location">
    <subcellularLocation>
        <location evidence="1">Cytoplasm</location>
    </subcellularLocation>
</comment>
<comment type="similarity">
    <text evidence="1">Belongs to the methyltransferase superfamily. Tam family.</text>
</comment>
<sequence>MSDWNPSLYLHFAAERSRPAVELLARVSLENIEYIADLGCGPGNSTALLHQRWPAARITGIDSSPAMIAEARSALPDCLFVEADIRNWQPEQALDLIFANASLQWLPDHYELFPHLVSLLSPLGVLAVQMPDNWLEPTHVLMREVAWEQNYPDRGREPLAGVHAYYDILSEAGCEVDIWRTTYYHQMPSHQAIIDWVTATGLRPWLQDLTESEQQHFLTRYHQMLEEQYPLQENGQILLAFPRLFIVARRTE</sequence>
<dbReference type="EC" id="2.1.1.144" evidence="1"/>
<dbReference type="EMBL" id="CU928161">
    <property type="protein sequence ID" value="CAR02911.1"/>
    <property type="molecule type" value="Genomic_DNA"/>
</dbReference>
<dbReference type="RefSeq" id="WP_001286588.1">
    <property type="nucleotide sequence ID" value="NC_011742.1"/>
</dbReference>
<dbReference type="SMR" id="B7MMY3"/>
<dbReference type="KEGG" id="ecz:ECS88_1596"/>
<dbReference type="HOGENOM" id="CLU_037990_5_2_6"/>
<dbReference type="Proteomes" id="UP000000747">
    <property type="component" value="Chromosome"/>
</dbReference>
<dbReference type="GO" id="GO:0005737">
    <property type="term" value="C:cytoplasm"/>
    <property type="evidence" value="ECO:0007669"/>
    <property type="project" value="UniProtKB-SubCell"/>
</dbReference>
<dbReference type="GO" id="GO:0030798">
    <property type="term" value="F:trans-aconitate 2-methyltransferase activity"/>
    <property type="evidence" value="ECO:0007669"/>
    <property type="project" value="UniProtKB-UniRule"/>
</dbReference>
<dbReference type="GO" id="GO:0032259">
    <property type="term" value="P:methylation"/>
    <property type="evidence" value="ECO:0007669"/>
    <property type="project" value="UniProtKB-KW"/>
</dbReference>
<dbReference type="CDD" id="cd02440">
    <property type="entry name" value="AdoMet_MTases"/>
    <property type="match status" value="1"/>
</dbReference>
<dbReference type="Gene3D" id="1.10.150.290">
    <property type="entry name" value="S-adenosyl-L-methionine-dependent methyltransferases"/>
    <property type="match status" value="1"/>
</dbReference>
<dbReference type="Gene3D" id="3.40.50.150">
    <property type="entry name" value="Vaccinia Virus protein VP39"/>
    <property type="match status" value="1"/>
</dbReference>
<dbReference type="HAMAP" id="MF_00560">
    <property type="entry name" value="Tran_acon_Me_trans"/>
    <property type="match status" value="1"/>
</dbReference>
<dbReference type="InterPro" id="IPR041698">
    <property type="entry name" value="Methyltransf_25"/>
</dbReference>
<dbReference type="InterPro" id="IPR029063">
    <property type="entry name" value="SAM-dependent_MTases_sf"/>
</dbReference>
<dbReference type="InterPro" id="IPR023506">
    <property type="entry name" value="Trans-aconitate_MeTrfase"/>
</dbReference>
<dbReference type="InterPro" id="IPR023149">
    <property type="entry name" value="Trans_acon_MeTrfase_C"/>
</dbReference>
<dbReference type="NCBIfam" id="NF002463">
    <property type="entry name" value="PRK01683.1"/>
    <property type="match status" value="1"/>
</dbReference>
<dbReference type="PANTHER" id="PTHR43861:SF1">
    <property type="entry name" value="TRANS-ACONITATE 2-METHYLTRANSFERASE"/>
    <property type="match status" value="1"/>
</dbReference>
<dbReference type="PANTHER" id="PTHR43861">
    <property type="entry name" value="TRANS-ACONITATE 2-METHYLTRANSFERASE-RELATED"/>
    <property type="match status" value="1"/>
</dbReference>
<dbReference type="Pfam" id="PF13649">
    <property type="entry name" value="Methyltransf_25"/>
    <property type="match status" value="1"/>
</dbReference>
<dbReference type="SUPFAM" id="SSF53335">
    <property type="entry name" value="S-adenosyl-L-methionine-dependent methyltransferases"/>
    <property type="match status" value="1"/>
</dbReference>
<protein>
    <recommendedName>
        <fullName evidence="1">Trans-aconitate 2-methyltransferase</fullName>
        <ecNumber evidence="1">2.1.1.144</ecNumber>
    </recommendedName>
</protein>
<feature type="chain" id="PRO_1000129250" description="Trans-aconitate 2-methyltransferase">
    <location>
        <begin position="1"/>
        <end position="252"/>
    </location>
</feature>
<organism>
    <name type="scientific">Escherichia coli O45:K1 (strain S88 / ExPEC)</name>
    <dbReference type="NCBI Taxonomy" id="585035"/>
    <lineage>
        <taxon>Bacteria</taxon>
        <taxon>Pseudomonadati</taxon>
        <taxon>Pseudomonadota</taxon>
        <taxon>Gammaproteobacteria</taxon>
        <taxon>Enterobacterales</taxon>
        <taxon>Enterobacteriaceae</taxon>
        <taxon>Escherichia</taxon>
    </lineage>
</organism>
<evidence type="ECO:0000255" key="1">
    <source>
        <dbReference type="HAMAP-Rule" id="MF_00560"/>
    </source>
</evidence>
<keyword id="KW-0963">Cytoplasm</keyword>
<keyword id="KW-0489">Methyltransferase</keyword>
<keyword id="KW-1185">Reference proteome</keyword>
<keyword id="KW-0949">S-adenosyl-L-methionine</keyword>
<keyword id="KW-0808">Transferase</keyword>
<gene>
    <name evidence="1" type="primary">tam</name>
    <name type="ordered locus">ECS88_1596</name>
</gene>
<proteinExistence type="inferred from homology"/>